<feature type="chain" id="PRO_0000212802" description="Probable mitochondrial pyruvate carrier 2">
    <location>
        <begin position="1"/>
        <end position="118"/>
    </location>
</feature>
<feature type="transmembrane region" description="Helical" evidence="3">
    <location>
        <begin position="19"/>
        <end position="35"/>
    </location>
</feature>
<feature type="transmembrane region" description="Helical" evidence="2">
    <location>
        <begin position="50"/>
        <end position="66"/>
    </location>
</feature>
<feature type="transmembrane region" description="Helical" evidence="2">
    <location>
        <begin position="72"/>
        <end position="94"/>
    </location>
</feature>
<gene>
    <name evidence="1 4" type="primary">mpc2</name>
    <name evidence="4" type="ORF">SPAC24B11.09</name>
</gene>
<reference key="1">
    <citation type="journal article" date="2002" name="Nature">
        <title>The genome sequence of Schizosaccharomyces pombe.</title>
        <authorList>
            <person name="Wood V."/>
            <person name="Gwilliam R."/>
            <person name="Rajandream M.A."/>
            <person name="Lyne M.H."/>
            <person name="Lyne R."/>
            <person name="Stewart A."/>
            <person name="Sgouros J.G."/>
            <person name="Peat N."/>
            <person name="Hayles J."/>
            <person name="Baker S.G."/>
            <person name="Basham D."/>
            <person name="Bowman S."/>
            <person name="Brooks K."/>
            <person name="Brown D."/>
            <person name="Brown S."/>
            <person name="Chillingworth T."/>
            <person name="Churcher C.M."/>
            <person name="Collins M."/>
            <person name="Connor R."/>
            <person name="Cronin A."/>
            <person name="Davis P."/>
            <person name="Feltwell T."/>
            <person name="Fraser A."/>
            <person name="Gentles S."/>
            <person name="Goble A."/>
            <person name="Hamlin N."/>
            <person name="Harris D.E."/>
            <person name="Hidalgo J."/>
            <person name="Hodgson G."/>
            <person name="Holroyd S."/>
            <person name="Hornsby T."/>
            <person name="Howarth S."/>
            <person name="Huckle E.J."/>
            <person name="Hunt S."/>
            <person name="Jagels K."/>
            <person name="James K.D."/>
            <person name="Jones L."/>
            <person name="Jones M."/>
            <person name="Leather S."/>
            <person name="McDonald S."/>
            <person name="McLean J."/>
            <person name="Mooney P."/>
            <person name="Moule S."/>
            <person name="Mungall K.L."/>
            <person name="Murphy L.D."/>
            <person name="Niblett D."/>
            <person name="Odell C."/>
            <person name="Oliver K."/>
            <person name="O'Neil S."/>
            <person name="Pearson D."/>
            <person name="Quail M.A."/>
            <person name="Rabbinowitsch E."/>
            <person name="Rutherford K.M."/>
            <person name="Rutter S."/>
            <person name="Saunders D."/>
            <person name="Seeger K."/>
            <person name="Sharp S."/>
            <person name="Skelton J."/>
            <person name="Simmonds M.N."/>
            <person name="Squares R."/>
            <person name="Squares S."/>
            <person name="Stevens K."/>
            <person name="Taylor K."/>
            <person name="Taylor R.G."/>
            <person name="Tivey A."/>
            <person name="Walsh S.V."/>
            <person name="Warren T."/>
            <person name="Whitehead S."/>
            <person name="Woodward J.R."/>
            <person name="Volckaert G."/>
            <person name="Aert R."/>
            <person name="Robben J."/>
            <person name="Grymonprez B."/>
            <person name="Weltjens I."/>
            <person name="Vanstreels E."/>
            <person name="Rieger M."/>
            <person name="Schaefer M."/>
            <person name="Mueller-Auer S."/>
            <person name="Gabel C."/>
            <person name="Fuchs M."/>
            <person name="Duesterhoeft A."/>
            <person name="Fritzc C."/>
            <person name="Holzer E."/>
            <person name="Moestl D."/>
            <person name="Hilbert H."/>
            <person name="Borzym K."/>
            <person name="Langer I."/>
            <person name="Beck A."/>
            <person name="Lehrach H."/>
            <person name="Reinhardt R."/>
            <person name="Pohl T.M."/>
            <person name="Eger P."/>
            <person name="Zimmermann W."/>
            <person name="Wedler H."/>
            <person name="Wambutt R."/>
            <person name="Purnelle B."/>
            <person name="Goffeau A."/>
            <person name="Cadieu E."/>
            <person name="Dreano S."/>
            <person name="Gloux S."/>
            <person name="Lelaure V."/>
            <person name="Mottier S."/>
            <person name="Galibert F."/>
            <person name="Aves S.J."/>
            <person name="Xiang Z."/>
            <person name="Hunt C."/>
            <person name="Moore K."/>
            <person name="Hurst S.M."/>
            <person name="Lucas M."/>
            <person name="Rochet M."/>
            <person name="Gaillardin C."/>
            <person name="Tallada V.A."/>
            <person name="Garzon A."/>
            <person name="Thode G."/>
            <person name="Daga R.R."/>
            <person name="Cruzado L."/>
            <person name="Jimenez J."/>
            <person name="Sanchez M."/>
            <person name="del Rey F."/>
            <person name="Benito J."/>
            <person name="Dominguez A."/>
            <person name="Revuelta J.L."/>
            <person name="Moreno S."/>
            <person name="Armstrong J."/>
            <person name="Forsburg S.L."/>
            <person name="Cerutti L."/>
            <person name="Lowe T."/>
            <person name="McCombie W.R."/>
            <person name="Paulsen I."/>
            <person name="Potashkin J."/>
            <person name="Shpakovski G.V."/>
            <person name="Ussery D."/>
            <person name="Barrell B.G."/>
            <person name="Nurse P."/>
        </authorList>
    </citation>
    <scope>NUCLEOTIDE SEQUENCE [LARGE SCALE GENOMIC DNA]</scope>
    <source>
        <strain>972 / ATCC 24843</strain>
    </source>
</reference>
<keyword id="KW-0472">Membrane</keyword>
<keyword id="KW-0496">Mitochondrion</keyword>
<keyword id="KW-0999">Mitochondrion inner membrane</keyword>
<keyword id="KW-1185">Reference proteome</keyword>
<keyword id="KW-0812">Transmembrane</keyword>
<keyword id="KW-1133">Transmembrane helix</keyword>
<keyword id="KW-0813">Transport</keyword>
<proteinExistence type="inferred from homology"/>
<name>MPC2_SCHPO</name>
<evidence type="ECO:0000250" key="1">
    <source>
        <dbReference type="UniProtKB" id="P38857"/>
    </source>
</evidence>
<evidence type="ECO:0000255" key="2"/>
<evidence type="ECO:0000305" key="3"/>
<evidence type="ECO:0000312" key="4">
    <source>
        <dbReference type="PomBase" id="SPAC24B11.09"/>
    </source>
</evidence>
<comment type="function">
    <text evidence="1">Mediates the uptake of pyruvate into mitochondria.</text>
</comment>
<comment type="subunit">
    <text evidence="1">The functional 150 kDa pyruvate import complex is a heteromer of mpc1 and mpc2.</text>
</comment>
<comment type="subcellular location">
    <subcellularLocation>
        <location evidence="1">Mitochondrion inner membrane</location>
        <topology evidence="2">Multi-pass membrane protein</topology>
    </subcellularLocation>
</comment>
<comment type="similarity">
    <text evidence="3">Belongs to the mitochondrial pyruvate carrier (MPC) (TC 2.A.105) family.</text>
</comment>
<accession>Q09896</accession>
<sequence length="118" mass="13536">MFRAGFKRFWNHPAGPKTVHFWAPAMKWTLVLSGIGDYARSPEYLSIRQYAALCATGAIWTRWSLIVRPKNYFNATVNFFLAIVGAVQVSRILVYQRQQKRITAQSEQRTELARSLAA</sequence>
<dbReference type="EMBL" id="CU329670">
    <property type="protein sequence ID" value="CAA91774.1"/>
    <property type="molecule type" value="Genomic_DNA"/>
</dbReference>
<dbReference type="PIR" id="S62554">
    <property type="entry name" value="S62554"/>
</dbReference>
<dbReference type="RefSeq" id="NP_592846.1">
    <property type="nucleotide sequence ID" value="NM_001018247.2"/>
</dbReference>
<dbReference type="SMR" id="Q09896"/>
<dbReference type="BioGRID" id="277977">
    <property type="interactions" value="20"/>
</dbReference>
<dbReference type="FunCoup" id="Q09896">
    <property type="interactions" value="89"/>
</dbReference>
<dbReference type="STRING" id="284812.Q09896"/>
<dbReference type="PaxDb" id="4896-SPAC24B11.09.1"/>
<dbReference type="EnsemblFungi" id="SPAC24B11.09.1">
    <property type="protein sequence ID" value="SPAC24B11.09.1:pep"/>
    <property type="gene ID" value="SPAC24B11.09"/>
</dbReference>
<dbReference type="GeneID" id="2541475"/>
<dbReference type="KEGG" id="spo:2541475"/>
<dbReference type="PomBase" id="SPAC24B11.09">
    <property type="gene designation" value="mpc2"/>
</dbReference>
<dbReference type="VEuPathDB" id="FungiDB:SPAC24B11.09"/>
<dbReference type="eggNOG" id="KOG1589">
    <property type="taxonomic scope" value="Eukaryota"/>
</dbReference>
<dbReference type="HOGENOM" id="CLU_099502_1_0_1"/>
<dbReference type="InParanoid" id="Q09896"/>
<dbReference type="OMA" id="PQQFAIC"/>
<dbReference type="PhylomeDB" id="Q09896"/>
<dbReference type="PRO" id="PR:Q09896"/>
<dbReference type="Proteomes" id="UP000002485">
    <property type="component" value="Chromosome I"/>
</dbReference>
<dbReference type="GO" id="GO:0005737">
    <property type="term" value="C:cytoplasm"/>
    <property type="evidence" value="ECO:0007005"/>
    <property type="project" value="PomBase"/>
</dbReference>
<dbReference type="GO" id="GO:0005743">
    <property type="term" value="C:mitochondrial inner membrane"/>
    <property type="evidence" value="ECO:0000318"/>
    <property type="project" value="GO_Central"/>
</dbReference>
<dbReference type="GO" id="GO:0050833">
    <property type="term" value="F:pyruvate transmembrane transporter activity"/>
    <property type="evidence" value="ECO:0000318"/>
    <property type="project" value="GO_Central"/>
</dbReference>
<dbReference type="GO" id="GO:0006850">
    <property type="term" value="P:mitochondrial pyruvate transmembrane transport"/>
    <property type="evidence" value="ECO:0000318"/>
    <property type="project" value="GO_Central"/>
</dbReference>
<dbReference type="InterPro" id="IPR005336">
    <property type="entry name" value="MPC"/>
</dbReference>
<dbReference type="PANTHER" id="PTHR14154">
    <property type="entry name" value="UPF0041 BRAIN PROTEIN 44-RELATED"/>
    <property type="match status" value="1"/>
</dbReference>
<dbReference type="Pfam" id="PF03650">
    <property type="entry name" value="MPC"/>
    <property type="match status" value="1"/>
</dbReference>
<protein>
    <recommendedName>
        <fullName evidence="1">Probable mitochondrial pyruvate carrier 2</fullName>
        <shortName evidence="1">MPC2</shortName>
    </recommendedName>
</protein>
<organism>
    <name type="scientific">Schizosaccharomyces pombe (strain 972 / ATCC 24843)</name>
    <name type="common">Fission yeast</name>
    <dbReference type="NCBI Taxonomy" id="284812"/>
    <lineage>
        <taxon>Eukaryota</taxon>
        <taxon>Fungi</taxon>
        <taxon>Dikarya</taxon>
        <taxon>Ascomycota</taxon>
        <taxon>Taphrinomycotina</taxon>
        <taxon>Schizosaccharomycetes</taxon>
        <taxon>Schizosaccharomycetales</taxon>
        <taxon>Schizosaccharomycetaceae</taxon>
        <taxon>Schizosaccharomyces</taxon>
    </lineage>
</organism>